<evidence type="ECO:0000250" key="1"/>
<evidence type="ECO:0000305" key="2"/>
<name>ADH_STAAC</name>
<feature type="chain" id="PRO_0000273035" description="Alcohol dehydrogenase">
    <location>
        <begin position="1"/>
        <end position="336"/>
    </location>
</feature>
<feature type="binding site" evidence="1">
    <location>
        <position position="37"/>
    </location>
    <ligand>
        <name>Zn(2+)</name>
        <dbReference type="ChEBI" id="CHEBI:29105"/>
        <label>1</label>
        <note>catalytic</note>
    </ligand>
</feature>
<feature type="binding site" evidence="1">
    <location>
        <position position="58"/>
    </location>
    <ligand>
        <name>Zn(2+)</name>
        <dbReference type="ChEBI" id="CHEBI:29105"/>
        <label>1</label>
        <note>catalytic</note>
    </ligand>
</feature>
<feature type="binding site" evidence="1">
    <location>
        <position position="89"/>
    </location>
    <ligand>
        <name>Zn(2+)</name>
        <dbReference type="ChEBI" id="CHEBI:29105"/>
        <label>2</label>
    </ligand>
</feature>
<feature type="binding site" evidence="1">
    <location>
        <position position="92"/>
    </location>
    <ligand>
        <name>Zn(2+)</name>
        <dbReference type="ChEBI" id="CHEBI:29105"/>
        <label>2</label>
    </ligand>
</feature>
<feature type="binding site" evidence="1">
    <location>
        <position position="95"/>
    </location>
    <ligand>
        <name>Zn(2+)</name>
        <dbReference type="ChEBI" id="CHEBI:29105"/>
        <label>2</label>
    </ligand>
</feature>
<feature type="binding site" evidence="1">
    <location>
        <position position="103"/>
    </location>
    <ligand>
        <name>Zn(2+)</name>
        <dbReference type="ChEBI" id="CHEBI:29105"/>
        <label>2</label>
    </ligand>
</feature>
<feature type="binding site" evidence="1">
    <location>
        <position position="145"/>
    </location>
    <ligand>
        <name>Zn(2+)</name>
        <dbReference type="ChEBI" id="CHEBI:29105"/>
        <label>1</label>
        <note>catalytic</note>
    </ligand>
</feature>
<proteinExistence type="inferred from homology"/>
<sequence>MRAAVVTKDHKVSIEDKKLRALKPGEALVQTEYCGVCHTDLHVKNADFGDVTGVTLGHEGIGKVIEVAEDVESLKIGDRVSIAWMFESCGRCEYCTTGRETLCRSVKNAGYTVDGAMAEQVIVTADYAVKVPEKLDPAAASSITCAGVTTYKAVKVSNVKPGQWLGVFGIGGLGNLALQYAKNVMGAKIVAFDINDDKLAFAKELGADAIINSKDVDPVAEVMKLTDNKGLDATVVTSVAKTPFNQAVDVVKAGARVVAVGLPVDKMNLDIPRLVLDGIEVVGSLVGTRQDLREAFEFAAENKVTPKVQLRKLEEINDIFEEMENGTITGRMVIKF</sequence>
<keyword id="KW-0479">Metal-binding</keyword>
<keyword id="KW-0520">NAD</keyword>
<keyword id="KW-0560">Oxidoreductase</keyword>
<keyword id="KW-0862">Zinc</keyword>
<protein>
    <recommendedName>
        <fullName>Alcohol dehydrogenase</fullName>
        <shortName>ADH</shortName>
        <ecNumber>1.1.1.1</ecNumber>
    </recommendedName>
</protein>
<dbReference type="EC" id="1.1.1.1"/>
<dbReference type="EMBL" id="CP000046">
    <property type="protein sequence ID" value="AAW36350.1"/>
    <property type="molecule type" value="Genomic_DNA"/>
</dbReference>
<dbReference type="SMR" id="Q5HI63"/>
<dbReference type="KEGG" id="sac:SACOL0660"/>
<dbReference type="HOGENOM" id="CLU_026673_20_1_9"/>
<dbReference type="Proteomes" id="UP000000530">
    <property type="component" value="Chromosome"/>
</dbReference>
<dbReference type="GO" id="GO:0004022">
    <property type="term" value="F:alcohol dehydrogenase (NAD+) activity"/>
    <property type="evidence" value="ECO:0007669"/>
    <property type="project" value="UniProtKB-EC"/>
</dbReference>
<dbReference type="GO" id="GO:0008270">
    <property type="term" value="F:zinc ion binding"/>
    <property type="evidence" value="ECO:0007669"/>
    <property type="project" value="InterPro"/>
</dbReference>
<dbReference type="CDD" id="cd08297">
    <property type="entry name" value="CAD3"/>
    <property type="match status" value="1"/>
</dbReference>
<dbReference type="FunFam" id="3.40.50.720:FF:000039">
    <property type="entry name" value="Alcohol dehydrogenase AdhP"/>
    <property type="match status" value="1"/>
</dbReference>
<dbReference type="Gene3D" id="3.90.180.10">
    <property type="entry name" value="Medium-chain alcohol dehydrogenases, catalytic domain"/>
    <property type="match status" value="1"/>
</dbReference>
<dbReference type="Gene3D" id="3.40.50.720">
    <property type="entry name" value="NAD(P)-binding Rossmann-like Domain"/>
    <property type="match status" value="1"/>
</dbReference>
<dbReference type="InterPro" id="IPR013149">
    <property type="entry name" value="ADH-like_C"/>
</dbReference>
<dbReference type="InterPro" id="IPR013154">
    <property type="entry name" value="ADH-like_N"/>
</dbReference>
<dbReference type="InterPro" id="IPR002328">
    <property type="entry name" value="ADH_Zn_CS"/>
</dbReference>
<dbReference type="InterPro" id="IPR029752">
    <property type="entry name" value="D-isomer_DH_CS1"/>
</dbReference>
<dbReference type="InterPro" id="IPR011032">
    <property type="entry name" value="GroES-like_sf"/>
</dbReference>
<dbReference type="InterPro" id="IPR036291">
    <property type="entry name" value="NAD(P)-bd_dom_sf"/>
</dbReference>
<dbReference type="InterPro" id="IPR020843">
    <property type="entry name" value="PKS_ER"/>
</dbReference>
<dbReference type="NCBIfam" id="NF006940">
    <property type="entry name" value="PRK09422.1"/>
    <property type="match status" value="1"/>
</dbReference>
<dbReference type="PANTHER" id="PTHR42940">
    <property type="entry name" value="ALCOHOL DEHYDROGENASE 1-RELATED"/>
    <property type="match status" value="1"/>
</dbReference>
<dbReference type="PANTHER" id="PTHR42940:SF8">
    <property type="entry name" value="VACUOLAR PROTEIN SORTING-ASSOCIATED PROTEIN 11"/>
    <property type="match status" value="1"/>
</dbReference>
<dbReference type="Pfam" id="PF08240">
    <property type="entry name" value="ADH_N"/>
    <property type="match status" value="1"/>
</dbReference>
<dbReference type="Pfam" id="PF00107">
    <property type="entry name" value="ADH_zinc_N"/>
    <property type="match status" value="1"/>
</dbReference>
<dbReference type="SMART" id="SM00829">
    <property type="entry name" value="PKS_ER"/>
    <property type="match status" value="1"/>
</dbReference>
<dbReference type="SUPFAM" id="SSF50129">
    <property type="entry name" value="GroES-like"/>
    <property type="match status" value="1"/>
</dbReference>
<dbReference type="SUPFAM" id="SSF51735">
    <property type="entry name" value="NAD(P)-binding Rossmann-fold domains"/>
    <property type="match status" value="1"/>
</dbReference>
<dbReference type="PROSITE" id="PS00059">
    <property type="entry name" value="ADH_ZINC"/>
    <property type="match status" value="1"/>
</dbReference>
<gene>
    <name type="primary">adh</name>
    <name type="ordered locus">SACOL0660</name>
</gene>
<accession>Q5HI63</accession>
<comment type="catalytic activity">
    <reaction>
        <text>a primary alcohol + NAD(+) = an aldehyde + NADH + H(+)</text>
        <dbReference type="Rhea" id="RHEA:10736"/>
        <dbReference type="ChEBI" id="CHEBI:15378"/>
        <dbReference type="ChEBI" id="CHEBI:15734"/>
        <dbReference type="ChEBI" id="CHEBI:17478"/>
        <dbReference type="ChEBI" id="CHEBI:57540"/>
        <dbReference type="ChEBI" id="CHEBI:57945"/>
        <dbReference type="EC" id="1.1.1.1"/>
    </reaction>
</comment>
<comment type="catalytic activity">
    <reaction>
        <text>a secondary alcohol + NAD(+) = a ketone + NADH + H(+)</text>
        <dbReference type="Rhea" id="RHEA:10740"/>
        <dbReference type="ChEBI" id="CHEBI:15378"/>
        <dbReference type="ChEBI" id="CHEBI:17087"/>
        <dbReference type="ChEBI" id="CHEBI:35681"/>
        <dbReference type="ChEBI" id="CHEBI:57540"/>
        <dbReference type="ChEBI" id="CHEBI:57945"/>
        <dbReference type="EC" id="1.1.1.1"/>
    </reaction>
</comment>
<comment type="cofactor">
    <cofactor evidence="1">
        <name>Zn(2+)</name>
        <dbReference type="ChEBI" id="CHEBI:29105"/>
    </cofactor>
    <text evidence="1">Binds 2 Zn(2+) ions per subunit.</text>
</comment>
<comment type="similarity">
    <text evidence="2">Belongs to the zinc-containing alcohol dehydrogenase family.</text>
</comment>
<organism>
    <name type="scientific">Staphylococcus aureus (strain COL)</name>
    <dbReference type="NCBI Taxonomy" id="93062"/>
    <lineage>
        <taxon>Bacteria</taxon>
        <taxon>Bacillati</taxon>
        <taxon>Bacillota</taxon>
        <taxon>Bacilli</taxon>
        <taxon>Bacillales</taxon>
        <taxon>Staphylococcaceae</taxon>
        <taxon>Staphylococcus</taxon>
    </lineage>
</organism>
<reference key="1">
    <citation type="journal article" date="2005" name="J. Bacteriol.">
        <title>Insights on evolution of virulence and resistance from the complete genome analysis of an early methicillin-resistant Staphylococcus aureus strain and a biofilm-producing methicillin-resistant Staphylococcus epidermidis strain.</title>
        <authorList>
            <person name="Gill S.R."/>
            <person name="Fouts D.E."/>
            <person name="Archer G.L."/>
            <person name="Mongodin E.F."/>
            <person name="DeBoy R.T."/>
            <person name="Ravel J."/>
            <person name="Paulsen I.T."/>
            <person name="Kolonay J.F."/>
            <person name="Brinkac L.M."/>
            <person name="Beanan M.J."/>
            <person name="Dodson R.J."/>
            <person name="Daugherty S.C."/>
            <person name="Madupu R."/>
            <person name="Angiuoli S.V."/>
            <person name="Durkin A.S."/>
            <person name="Haft D.H."/>
            <person name="Vamathevan J.J."/>
            <person name="Khouri H."/>
            <person name="Utterback T.R."/>
            <person name="Lee C."/>
            <person name="Dimitrov G."/>
            <person name="Jiang L."/>
            <person name="Qin H."/>
            <person name="Weidman J."/>
            <person name="Tran K."/>
            <person name="Kang K.H."/>
            <person name="Hance I.R."/>
            <person name="Nelson K.E."/>
            <person name="Fraser C.M."/>
        </authorList>
    </citation>
    <scope>NUCLEOTIDE SEQUENCE [LARGE SCALE GENOMIC DNA]</scope>
    <source>
        <strain>COL</strain>
    </source>
</reference>